<organism>
    <name type="scientific">Enterobacteria phage T4</name>
    <name type="common">Bacteriophage T4</name>
    <dbReference type="NCBI Taxonomy" id="10665"/>
    <lineage>
        <taxon>Viruses</taxon>
        <taxon>Duplodnaviria</taxon>
        <taxon>Heunggongvirae</taxon>
        <taxon>Uroviricota</taxon>
        <taxon>Caudoviricetes</taxon>
        <taxon>Straboviridae</taxon>
        <taxon>Tevenvirinae</taxon>
        <taxon>Tequatrovirus</taxon>
    </lineage>
</organism>
<accession>P11111</accession>
<evidence type="ECO:0000269" key="1">
    <source>
    </source>
</evidence>
<keyword id="KW-1185">Reference proteome</keyword>
<keyword id="KW-0946">Virion</keyword>
<dbReference type="EMBL" id="X14868">
    <property type="protein sequence ID" value="CAA33008.1"/>
    <property type="molecule type" value="Genomic_DNA"/>
</dbReference>
<dbReference type="EMBL" id="AF158101">
    <property type="protein sequence ID" value="AAD42419.1"/>
    <property type="molecule type" value="Genomic_DNA"/>
</dbReference>
<dbReference type="PIR" id="JF0053">
    <property type="entry name" value="GFBPT4"/>
</dbReference>
<dbReference type="RefSeq" id="NP_049773.1">
    <property type="nucleotide sequence ID" value="NC_000866.4"/>
</dbReference>
<dbReference type="GeneID" id="1258695"/>
<dbReference type="KEGG" id="vg:1258695"/>
<dbReference type="OrthoDB" id="5624at10239"/>
<dbReference type="Proteomes" id="UP000009087">
    <property type="component" value="Segment"/>
</dbReference>
<dbReference type="GO" id="GO:0044423">
    <property type="term" value="C:virion component"/>
    <property type="evidence" value="ECO:0007669"/>
    <property type="project" value="UniProtKB-KW"/>
</dbReference>
<dbReference type="InterPro" id="IPR021674">
    <property type="entry name" value="Phage_T4_Gp14_neck-protein"/>
</dbReference>
<dbReference type="Pfam" id="PF11649">
    <property type="entry name" value="T4_neck-protein"/>
    <property type="match status" value="1"/>
</dbReference>
<comment type="function">
    <text evidence="1">Plays a role in the association of the virion head and tail after packaging of viral DNA within the head. Together with gp14, forms a neck at the portal vertex of the head to be ready for the tail attachment.</text>
</comment>
<comment type="subunit">
    <text>Gp13 and gp14 form a hetero-oligomer complex with a stoichiometry of 10:5.</text>
</comment>
<comment type="subcellular location">
    <subcellularLocation>
        <location>Virion</location>
    </subcellularLocation>
</comment>
<protein>
    <recommendedName>
        <fullName>Neck protein gp14</fullName>
    </recommendedName>
    <alternativeName>
        <fullName>Gene product 14</fullName>
        <shortName>gp14</shortName>
    </alternativeName>
</protein>
<name>NECK2_BPT4</name>
<proteinExistence type="evidence at protein level"/>
<reference key="1">
    <citation type="journal article" date="1989" name="Nucleic Acids Res.">
        <title>Nucleotide sequences of bacteriophage T4 genes 13, 14 and 15.</title>
        <authorList>
            <person name="Selivanov N.A."/>
            <person name="Prilipov A.G."/>
            <person name="Mesyanzhinov V.V."/>
        </authorList>
    </citation>
    <scope>NUCLEOTIDE SEQUENCE [GENOMIC DNA]</scope>
    <source>
        <strain>D</strain>
    </source>
</reference>
<reference key="2">
    <citation type="journal article" date="2003" name="Microbiol. Mol. Biol. Rev.">
        <title>Bacteriophage T4 genome.</title>
        <authorList>
            <person name="Miller E.S."/>
            <person name="Kutter E."/>
            <person name="Mosig G."/>
            <person name="Arisaka F."/>
            <person name="Kunisawa T."/>
            <person name="Ruger W."/>
        </authorList>
    </citation>
    <scope>NUCLEOTIDE SEQUENCE [LARGE SCALE GENOMIC DNA]</scope>
</reference>
<reference key="3">
    <citation type="journal article" date="2007" name="Biochim. Biophys. Acta">
        <title>The neck of bacteriophage T4 is a ring-like structure formed by a hetero-oligomer of gp13 and gp14.</title>
        <authorList>
            <person name="Akhter T."/>
            <person name="Zhao L."/>
            <person name="Kohda A."/>
            <person name="Mio K."/>
            <person name="Kanamaru S."/>
            <person name="Arisaka F."/>
        </authorList>
    </citation>
    <scope>FUNCTION</scope>
    <scope>SUBUNIT</scope>
</reference>
<organismHost>
    <name type="scientific">Escherichia coli</name>
    <dbReference type="NCBI Taxonomy" id="562"/>
</organismHost>
<gene>
    <name type="primary">14</name>
</gene>
<sequence>MATYDKNLFAKLENRTGYSQTNETEILNPYVNFNHYKNSQILADVLVAESIQMRGVECYYVPREYVSPDLIFGEDLKNKFTKAWKFAAYLNSFEGYEGAKSFFSNFGMQVQDEVTLSINPNLFKHQVNGKEPKEGDLIYFPMDNSLFEINWVEPYDPFYQLGQNAIRKITAGKFIYSGEEINPVLQKNEGINIPEFSELELNAVRNLNGIHDINIDQYAEVDQINSEAKEYVEPYVVVNNRGKSFESSPFDNDFMD</sequence>
<feature type="chain" id="PRO_0000165004" description="Neck protein gp14">
    <location>
        <begin position="1"/>
        <end position="256"/>
    </location>
</feature>